<evidence type="ECO:0000250" key="1"/>
<evidence type="ECO:0000250" key="2">
    <source>
        <dbReference type="UniProtKB" id="P58775"/>
    </source>
</evidence>
<evidence type="ECO:0000256" key="3">
    <source>
        <dbReference type="SAM" id="MobiDB-lite"/>
    </source>
</evidence>
<evidence type="ECO:0000303" key="4">
    <source>
    </source>
</evidence>
<evidence type="ECO:0000303" key="5">
    <source>
    </source>
</evidence>
<evidence type="ECO:0000303" key="6">
    <source>
    </source>
</evidence>
<evidence type="ECO:0000305" key="7"/>
<evidence type="ECO:0007829" key="8">
    <source>
        <dbReference type="PDB" id="3U59"/>
    </source>
</evidence>
<comment type="function">
    <text evidence="2">Binds to actin filaments in muscle and non-muscle cells. Plays a central role, in association with the troponin complex, in the calcium dependent regulation of vertebrate striated muscle contraction. Smooth muscle contraction is regulated by interaction with caldesmon. In non-muscle cells is implicated in stabilizing cytoskeleton actin filaments.</text>
</comment>
<comment type="subunit">
    <text evidence="2">Homodimer. Heterodimer of an alpha (TPM1, TPM3 or TPM4) and a beta (TPM2) chain.</text>
</comment>
<comment type="subcellular location">
    <subcellularLocation>
        <location evidence="2">Cytoplasm</location>
        <location evidence="2">Cytoskeleton</location>
    </subcellularLocation>
    <text evidence="2">Associates with F-actin stress fibers.</text>
</comment>
<comment type="alternative products">
    <event type="alternative splicing"/>
    <isoform>
        <id>P19352-1</id>
        <name>1</name>
        <name>Skeletal muscle</name>
        <sequence type="displayed"/>
    </isoform>
    <isoform>
        <id>P19352-2</id>
        <name>2</name>
        <name>Smooth muscle</name>
        <name>Gizzard</name>
        <sequence type="described" ref="VSP_006602 VSP_006603"/>
    </isoform>
    <isoform>
        <id>P19352-3</id>
        <name>3</name>
        <name>Fibroblast</name>
        <name>3b</name>
        <sequence type="described" ref="VSP_006601 VSP_006602 VSP_006603"/>
    </isoform>
</comment>
<comment type="domain">
    <text>The molecule is in a coiled coil structure that is formed by 2 polypeptide chains. The sequence exhibits a prominent seven-residues periodicity.</text>
</comment>
<comment type="similarity">
    <text evidence="7">Belongs to the tropomyosin family.</text>
</comment>
<dbReference type="EMBL" id="K02446">
    <property type="protein sequence ID" value="AAA49109.1"/>
    <property type="molecule type" value="mRNA"/>
</dbReference>
<dbReference type="EMBL" id="M21226">
    <property type="protein sequence ID" value="AAA49116.1"/>
    <property type="molecule type" value="Genomic_DNA"/>
</dbReference>
<dbReference type="EMBL" id="M21223">
    <property type="protein sequence ID" value="AAA49116.1"/>
    <property type="status" value="JOINED"/>
    <property type="molecule type" value="Genomic_DNA"/>
</dbReference>
<dbReference type="EMBL" id="M21224">
    <property type="protein sequence ID" value="AAA49116.1"/>
    <property type="status" value="JOINED"/>
    <property type="molecule type" value="Genomic_DNA"/>
</dbReference>
<dbReference type="EMBL" id="M21225">
    <property type="protein sequence ID" value="AAA49116.1"/>
    <property type="status" value="JOINED"/>
    <property type="molecule type" value="Genomic_DNA"/>
</dbReference>
<dbReference type="EMBL" id="M23081">
    <property type="protein sequence ID" value="AAA49117.1"/>
    <property type="molecule type" value="mRNA"/>
</dbReference>
<dbReference type="EMBL" id="M23082">
    <property type="protein sequence ID" value="AAA49112.1"/>
    <property type="molecule type" value="mRNA"/>
</dbReference>
<dbReference type="PIR" id="A30125">
    <property type="entry name" value="A30125"/>
</dbReference>
<dbReference type="PIR" id="A92462">
    <property type="entry name" value="TMCHS1"/>
</dbReference>
<dbReference type="PIR" id="B30125">
    <property type="entry name" value="B30125"/>
</dbReference>
<dbReference type="RefSeq" id="XP_015132746.1">
    <molecule id="P19352-2"/>
    <property type="nucleotide sequence ID" value="XM_015277260.4"/>
</dbReference>
<dbReference type="RefSeq" id="XP_015132749.1">
    <molecule id="P19352-1"/>
    <property type="nucleotide sequence ID" value="XM_015277263.3"/>
</dbReference>
<dbReference type="RefSeq" id="XP_015132753.1">
    <molecule id="P19352-3"/>
    <property type="nucleotide sequence ID" value="XM_015277267.4"/>
</dbReference>
<dbReference type="RefSeq" id="XP_046790843.1">
    <molecule id="P19352-2"/>
    <property type="nucleotide sequence ID" value="XM_046934887.1"/>
</dbReference>
<dbReference type="RefSeq" id="XP_046790846.1">
    <molecule id="P19352-1"/>
    <property type="nucleotide sequence ID" value="XM_046934890.1"/>
</dbReference>
<dbReference type="RefSeq" id="XP_046790849.1">
    <molecule id="P19352-3"/>
    <property type="nucleotide sequence ID" value="XM_046934893.1"/>
</dbReference>
<dbReference type="PDB" id="3U59">
    <property type="method" value="X-ray"/>
    <property type="resolution" value="2.50 A"/>
    <property type="chains" value="A/B/C/D=1-98"/>
</dbReference>
<dbReference type="PDBsum" id="3U59"/>
<dbReference type="EMDB" id="EMD-5751"/>
<dbReference type="SMR" id="P19352"/>
<dbReference type="FunCoup" id="P19352">
    <property type="interactions" value="1574"/>
</dbReference>
<dbReference type="IntAct" id="P19352">
    <property type="interactions" value="1"/>
</dbReference>
<dbReference type="MINT" id="P19352"/>
<dbReference type="PaxDb" id="9031-ENSGALP00000041062"/>
<dbReference type="Ensembl" id="ENSGALT00010021603.1">
    <molecule id="P19352-3"/>
    <property type="protein sequence ID" value="ENSGALP00010012306.1"/>
    <property type="gene ID" value="ENSGALG00010009070.1"/>
</dbReference>
<dbReference type="Ensembl" id="ENSGALT00010026276.1">
    <molecule id="P19352-3"/>
    <property type="protein sequence ID" value="ENSGALP00010014900.1"/>
    <property type="gene ID" value="ENSGALG00010010970.1"/>
</dbReference>
<dbReference type="GeneID" id="396430"/>
<dbReference type="CTD" id="7169"/>
<dbReference type="VEuPathDB" id="HostDB:geneid_396430"/>
<dbReference type="eggNOG" id="KOG1003">
    <property type="taxonomic scope" value="Eukaryota"/>
</dbReference>
<dbReference type="GeneTree" id="ENSGT01030000234542"/>
<dbReference type="InParanoid" id="P19352"/>
<dbReference type="OMA" id="FYDADQT"/>
<dbReference type="OrthoDB" id="128924at2759"/>
<dbReference type="PhylomeDB" id="P19352"/>
<dbReference type="EvolutionaryTrace" id="P19352"/>
<dbReference type="PRO" id="PR:P19352"/>
<dbReference type="Proteomes" id="UP000000539">
    <property type="component" value="Chromosome Z"/>
</dbReference>
<dbReference type="GO" id="GO:0015629">
    <property type="term" value="C:actin cytoskeleton"/>
    <property type="evidence" value="ECO:0000250"/>
    <property type="project" value="UniProtKB"/>
</dbReference>
<dbReference type="GO" id="GO:0005884">
    <property type="term" value="C:actin filament"/>
    <property type="evidence" value="ECO:0000318"/>
    <property type="project" value="GO_Central"/>
</dbReference>
<dbReference type="GO" id="GO:0005737">
    <property type="term" value="C:cytoplasm"/>
    <property type="evidence" value="ECO:0007669"/>
    <property type="project" value="UniProtKB-KW"/>
</dbReference>
<dbReference type="GO" id="GO:0051015">
    <property type="term" value="F:actin filament binding"/>
    <property type="evidence" value="ECO:0000250"/>
    <property type="project" value="UniProtKB"/>
</dbReference>
<dbReference type="GO" id="GO:0042802">
    <property type="term" value="F:identical protein binding"/>
    <property type="evidence" value="ECO:0000250"/>
    <property type="project" value="UniProtKB"/>
</dbReference>
<dbReference type="GO" id="GO:0046982">
    <property type="term" value="F:protein heterodimerization activity"/>
    <property type="evidence" value="ECO:0000250"/>
    <property type="project" value="UniProtKB"/>
</dbReference>
<dbReference type="GO" id="GO:0042803">
    <property type="term" value="F:protein homodimerization activity"/>
    <property type="evidence" value="ECO:0000250"/>
    <property type="project" value="UniProtKB"/>
</dbReference>
<dbReference type="GO" id="GO:0007015">
    <property type="term" value="P:actin filament organization"/>
    <property type="evidence" value="ECO:0000318"/>
    <property type="project" value="GO_Central"/>
</dbReference>
<dbReference type="GO" id="GO:0006936">
    <property type="term" value="P:muscle contraction"/>
    <property type="evidence" value="ECO:0000318"/>
    <property type="project" value="GO_Central"/>
</dbReference>
<dbReference type="FunFam" id="1.20.5.170:FF:000005">
    <property type="entry name" value="Tropomyosin alpha-1 chain"/>
    <property type="match status" value="1"/>
</dbReference>
<dbReference type="FunFam" id="1.20.5.170:FF:000001">
    <property type="entry name" value="Tropomyosin alpha-1 chain isoform 1"/>
    <property type="match status" value="1"/>
</dbReference>
<dbReference type="FunFam" id="1.20.5.340:FF:000001">
    <property type="entry name" value="Tropomyosin alpha-1 chain isoform 2"/>
    <property type="match status" value="1"/>
</dbReference>
<dbReference type="Gene3D" id="1.20.5.170">
    <property type="match status" value="2"/>
</dbReference>
<dbReference type="Gene3D" id="1.20.5.340">
    <property type="match status" value="1"/>
</dbReference>
<dbReference type="InterPro" id="IPR000533">
    <property type="entry name" value="Tropomyosin"/>
</dbReference>
<dbReference type="PANTHER" id="PTHR19269">
    <property type="entry name" value="TROPOMYOSIN"/>
    <property type="match status" value="1"/>
</dbReference>
<dbReference type="Pfam" id="PF00261">
    <property type="entry name" value="Tropomyosin"/>
    <property type="match status" value="1"/>
</dbReference>
<dbReference type="PRINTS" id="PR00194">
    <property type="entry name" value="TROPOMYOSIN"/>
</dbReference>
<dbReference type="SUPFAM" id="SSF57997">
    <property type="entry name" value="Tropomyosin"/>
    <property type="match status" value="1"/>
</dbReference>
<dbReference type="PROSITE" id="PS00326">
    <property type="entry name" value="TROPOMYOSIN"/>
    <property type="match status" value="1"/>
</dbReference>
<keyword id="KW-0002">3D-structure</keyword>
<keyword id="KW-0007">Acetylation</keyword>
<keyword id="KW-0009">Actin-binding</keyword>
<keyword id="KW-0025">Alternative splicing</keyword>
<keyword id="KW-0175">Coiled coil</keyword>
<keyword id="KW-0963">Cytoplasm</keyword>
<keyword id="KW-0206">Cytoskeleton</keyword>
<keyword id="KW-0903">Direct protein sequencing</keyword>
<keyword id="KW-0514">Muscle protein</keyword>
<keyword id="KW-1185">Reference proteome</keyword>
<sequence length="284" mass="32777">MEAIKKKMQMLKLDKENAIDRAEQAEADKKQAEDRCKQLEEEQQGLQKKLKGTEDEVEKYSESVKEAQEKLEQAEKKATDAEAEVASLNRRIQLVEEELDRAQERLATALQKLEEAEKAADESERGMKVIENRAMKDEEKMELQEMQLKEAKHIAEEADRKYEEVARKLVVLEGELERSEERAEVAESKCGDLEEELKIVTNNLKSLEAQADKYSTKEDKYEEEIKLLGEKLKEAETRAEFAERSVAKLEKTIDDLEDEVYAQKMKYKAISEELDNALNDITSL</sequence>
<accession>P19352</accession>
<accession>P04267</accession>
<accession>P19353</accession>
<feature type="chain" id="PRO_0000205631" description="Tropomyosin beta chain">
    <location>
        <begin position="1"/>
        <end position="284"/>
    </location>
</feature>
<feature type="region of interest" description="Disordered" evidence="3">
    <location>
        <begin position="22"/>
        <end position="66"/>
    </location>
</feature>
<feature type="coiled-coil region" evidence="1">
    <location>
        <begin position="1"/>
        <end position="284"/>
    </location>
</feature>
<feature type="compositionally biased region" description="Basic and acidic residues" evidence="3">
    <location>
        <begin position="22"/>
        <end position="40"/>
    </location>
</feature>
<feature type="compositionally biased region" description="Basic and acidic residues" evidence="3">
    <location>
        <begin position="51"/>
        <end position="66"/>
    </location>
</feature>
<feature type="modified residue" description="N-acetylmethionine" evidence="1">
    <location>
        <position position="1"/>
    </location>
</feature>
<feature type="splice variant" id="VSP_006601" description="In isoform 3." evidence="4">
    <original>MEAIKKKMQMLKLDKENAIDRAEQAEADKKQAEDRCKQLEEEQQGLQKKLKGTEDEVEKYSESVKEAQEKLEQAEKKATD</original>
    <variation>MAGISSIDAVKKKIQSLQQVADEAEERAEHLQREADAERQARER</variation>
    <location>
        <begin position="1"/>
        <end position="80"/>
    </location>
</feature>
<feature type="splice variant" id="VSP_006602" description="In isoform 2 and isoform 3." evidence="4 5 6">
    <original>KCGDLEEELKIVTNNLKSLEAQADK</original>
    <variation>RVRQLEEELRTMDQSLKSLIASEEE</variation>
    <location>
        <begin position="189"/>
        <end position="213"/>
    </location>
</feature>
<feature type="splice variant" id="VSP_006603" description="In isoform 2 and isoform 3." evidence="4 5 6">
    <original>DEVYAQKMKYKAISEELDNALNDITSL</original>
    <variation>ESLASAKEENVGIHQVLDQTLLELNNL</variation>
    <location>
        <begin position="258"/>
        <end position="284"/>
    </location>
</feature>
<feature type="helix" evidence="8">
    <location>
        <begin position="1"/>
        <end position="95"/>
    </location>
</feature>
<proteinExistence type="evidence at protein level"/>
<organism>
    <name type="scientific">Gallus gallus</name>
    <name type="common">Chicken</name>
    <dbReference type="NCBI Taxonomy" id="9031"/>
    <lineage>
        <taxon>Eukaryota</taxon>
        <taxon>Metazoa</taxon>
        <taxon>Chordata</taxon>
        <taxon>Craniata</taxon>
        <taxon>Vertebrata</taxon>
        <taxon>Euteleostomi</taxon>
        <taxon>Archelosauria</taxon>
        <taxon>Archosauria</taxon>
        <taxon>Dinosauria</taxon>
        <taxon>Saurischia</taxon>
        <taxon>Theropoda</taxon>
        <taxon>Coelurosauria</taxon>
        <taxon>Aves</taxon>
        <taxon>Neognathae</taxon>
        <taxon>Galloanserae</taxon>
        <taxon>Galliformes</taxon>
        <taxon>Phasianidae</taxon>
        <taxon>Phasianinae</taxon>
        <taxon>Gallus</taxon>
    </lineage>
</organism>
<protein>
    <recommendedName>
        <fullName>Tropomyosin beta chain</fullName>
    </recommendedName>
    <alternativeName>
        <fullName>Beta-tropomyosin</fullName>
    </alternativeName>
    <alternativeName>
        <fullName>Tropomyosin-2</fullName>
    </alternativeName>
</protein>
<reference key="1">
    <citation type="journal article" date="1984" name="J. Biol. Chem.">
        <title>Isolation and sequence of a cDNA clone that contains the entire coding region for chicken smooth-muscle alpha-tropomyosin.</title>
        <authorList>
            <person name="Helfman D.M."/>
            <person name="Feramisco J.R."/>
            <person name="Ricci W.M."/>
            <person name="Hughes S.H."/>
        </authorList>
    </citation>
    <scope>NUCLEOTIDE SEQUENCE [MRNA] (ISOFORM 2)</scope>
</reference>
<reference key="2">
    <citation type="journal article" date="1989" name="Mol. Cell. Biol.">
        <title>Isolation and characterization of related cDNA clones encoding skeletal muscle beta-tropomyosin and a low-molecular-weight nonmuscle tropomyosin isoform.</title>
        <authorList>
            <person name="Bradac J.A."/>
            <person name="Gruber C.E."/>
            <person name="Forry-Schaudies S."/>
            <person name="Hughes S.H."/>
        </authorList>
    </citation>
    <scope>NUCLEOTIDE SEQUENCE [MRNA] (ISOFORMS 1 AND 3)</scope>
</reference>
<reference key="3">
    <citation type="journal article" date="1989" name="J. Biol. Chem.">
        <title>A single gene codes for the beta subunits of smooth and skeletal muscle tropomyosin in the chicken.</title>
        <authorList>
            <person name="Libri D."/>
            <person name="Lemonnier M."/>
            <person name="Meinnel T."/>
            <person name="Fiszman M.Y."/>
        </authorList>
    </citation>
    <scope>NUCLEOTIDE SEQUENCE [GENOMIC DNA] (ISOFORMS 1 AND 2)</scope>
</reference>
<reference key="4">
    <citation type="journal article" date="1985" name="J. Biol. Chem.">
        <title>Amino acid sequence of chicken gizzard beta-tropomyosin. Comparison of the chicken gizzard, rabbit skeletal, and equine platelet tropomyosins.</title>
        <authorList>
            <person name="Sanders C."/>
            <person name="Smillie L.B."/>
        </authorList>
    </citation>
    <scope>PROTEIN SEQUENCE (ISOFORM 2)</scope>
</reference>
<gene>
    <name type="primary">TPM2</name>
</gene>
<name>TPM2_CHICK</name>